<protein>
    <recommendedName>
        <fullName evidence="1">Imidazoleglycerol-phosphate dehydratase</fullName>
        <shortName evidence="1">IGPD</shortName>
        <ecNumber evidence="1">4.2.1.19</ecNumber>
    </recommendedName>
</protein>
<name>HIS7_BORBR</name>
<keyword id="KW-0028">Amino-acid biosynthesis</keyword>
<keyword id="KW-0963">Cytoplasm</keyword>
<keyword id="KW-0368">Histidine biosynthesis</keyword>
<keyword id="KW-0456">Lyase</keyword>
<dbReference type="EC" id="4.2.1.19" evidence="1"/>
<dbReference type="EMBL" id="BX640451">
    <property type="protein sequence ID" value="CAE35219.1"/>
    <property type="molecule type" value="Genomic_DNA"/>
</dbReference>
<dbReference type="RefSeq" id="WP_003815795.1">
    <property type="nucleotide sequence ID" value="NC_002927.3"/>
</dbReference>
<dbReference type="SMR" id="Q7WDY2"/>
<dbReference type="GeneID" id="93206066"/>
<dbReference type="KEGG" id="bbr:BB4856"/>
<dbReference type="eggNOG" id="COG0131">
    <property type="taxonomic scope" value="Bacteria"/>
</dbReference>
<dbReference type="HOGENOM" id="CLU_044308_2_0_4"/>
<dbReference type="UniPathway" id="UPA00031">
    <property type="reaction ID" value="UER00011"/>
</dbReference>
<dbReference type="Proteomes" id="UP000001027">
    <property type="component" value="Chromosome"/>
</dbReference>
<dbReference type="GO" id="GO:0005737">
    <property type="term" value="C:cytoplasm"/>
    <property type="evidence" value="ECO:0007669"/>
    <property type="project" value="UniProtKB-SubCell"/>
</dbReference>
<dbReference type="GO" id="GO:0004424">
    <property type="term" value="F:imidazoleglycerol-phosphate dehydratase activity"/>
    <property type="evidence" value="ECO:0007669"/>
    <property type="project" value="UniProtKB-UniRule"/>
</dbReference>
<dbReference type="GO" id="GO:0000105">
    <property type="term" value="P:L-histidine biosynthetic process"/>
    <property type="evidence" value="ECO:0007669"/>
    <property type="project" value="UniProtKB-UniRule"/>
</dbReference>
<dbReference type="CDD" id="cd07914">
    <property type="entry name" value="IGPD"/>
    <property type="match status" value="1"/>
</dbReference>
<dbReference type="FunFam" id="3.30.230.40:FF:000002">
    <property type="entry name" value="Imidazoleglycerol-phosphate dehydratase"/>
    <property type="match status" value="1"/>
</dbReference>
<dbReference type="FunFam" id="3.30.230.40:FF:000003">
    <property type="entry name" value="Imidazoleglycerol-phosphate dehydratase HisB"/>
    <property type="match status" value="1"/>
</dbReference>
<dbReference type="Gene3D" id="3.30.230.40">
    <property type="entry name" value="Imidazole glycerol phosphate dehydratase, domain 1"/>
    <property type="match status" value="2"/>
</dbReference>
<dbReference type="HAMAP" id="MF_00076">
    <property type="entry name" value="HisB"/>
    <property type="match status" value="1"/>
</dbReference>
<dbReference type="InterPro" id="IPR038494">
    <property type="entry name" value="IGPD_sf"/>
</dbReference>
<dbReference type="InterPro" id="IPR000807">
    <property type="entry name" value="ImidazoleglycerolP_deHydtase"/>
</dbReference>
<dbReference type="InterPro" id="IPR020565">
    <property type="entry name" value="ImidazoleglycerP_deHydtase_CS"/>
</dbReference>
<dbReference type="InterPro" id="IPR020568">
    <property type="entry name" value="Ribosomal_Su5_D2-typ_SF"/>
</dbReference>
<dbReference type="NCBIfam" id="NF002106">
    <property type="entry name" value="PRK00951.1-1"/>
    <property type="match status" value="1"/>
</dbReference>
<dbReference type="NCBIfam" id="NF002109">
    <property type="entry name" value="PRK00951.1-5"/>
    <property type="match status" value="1"/>
</dbReference>
<dbReference type="NCBIfam" id="NF002111">
    <property type="entry name" value="PRK00951.2-1"/>
    <property type="match status" value="1"/>
</dbReference>
<dbReference type="NCBIfam" id="NF002114">
    <property type="entry name" value="PRK00951.2-4"/>
    <property type="match status" value="1"/>
</dbReference>
<dbReference type="PANTHER" id="PTHR23133:SF2">
    <property type="entry name" value="IMIDAZOLEGLYCEROL-PHOSPHATE DEHYDRATASE"/>
    <property type="match status" value="1"/>
</dbReference>
<dbReference type="PANTHER" id="PTHR23133">
    <property type="entry name" value="IMIDAZOLEGLYCEROL-PHOSPHATE DEHYDRATASE HIS7"/>
    <property type="match status" value="1"/>
</dbReference>
<dbReference type="Pfam" id="PF00475">
    <property type="entry name" value="IGPD"/>
    <property type="match status" value="1"/>
</dbReference>
<dbReference type="SUPFAM" id="SSF54211">
    <property type="entry name" value="Ribosomal protein S5 domain 2-like"/>
    <property type="match status" value="2"/>
</dbReference>
<dbReference type="PROSITE" id="PS00954">
    <property type="entry name" value="IGP_DEHYDRATASE_1"/>
    <property type="match status" value="1"/>
</dbReference>
<dbReference type="PROSITE" id="PS00955">
    <property type="entry name" value="IGP_DEHYDRATASE_2"/>
    <property type="match status" value="1"/>
</dbReference>
<comment type="catalytic activity">
    <reaction evidence="1">
        <text>D-erythro-1-(imidazol-4-yl)glycerol 3-phosphate = 3-(imidazol-4-yl)-2-oxopropyl phosphate + H2O</text>
        <dbReference type="Rhea" id="RHEA:11040"/>
        <dbReference type="ChEBI" id="CHEBI:15377"/>
        <dbReference type="ChEBI" id="CHEBI:57766"/>
        <dbReference type="ChEBI" id="CHEBI:58278"/>
        <dbReference type="EC" id="4.2.1.19"/>
    </reaction>
</comment>
<comment type="pathway">
    <text evidence="1">Amino-acid biosynthesis; L-histidine biosynthesis; L-histidine from 5-phospho-alpha-D-ribose 1-diphosphate: step 6/9.</text>
</comment>
<comment type="subcellular location">
    <subcellularLocation>
        <location evidence="1">Cytoplasm</location>
    </subcellularLocation>
</comment>
<comment type="similarity">
    <text evidence="1">Belongs to the imidazoleglycerol-phosphate dehydratase family.</text>
</comment>
<feature type="chain" id="PRO_0000158112" description="Imidazoleglycerol-phosphate dehydratase">
    <location>
        <begin position="1"/>
        <end position="195"/>
    </location>
</feature>
<proteinExistence type="inferred from homology"/>
<evidence type="ECO:0000255" key="1">
    <source>
        <dbReference type="HAMAP-Rule" id="MF_00076"/>
    </source>
</evidence>
<gene>
    <name evidence="1" type="primary">hisB</name>
    <name type="ordered locus">BB4856</name>
</gene>
<reference key="1">
    <citation type="journal article" date="2003" name="Nat. Genet.">
        <title>Comparative analysis of the genome sequences of Bordetella pertussis, Bordetella parapertussis and Bordetella bronchiseptica.</title>
        <authorList>
            <person name="Parkhill J."/>
            <person name="Sebaihia M."/>
            <person name="Preston A."/>
            <person name="Murphy L.D."/>
            <person name="Thomson N.R."/>
            <person name="Harris D.E."/>
            <person name="Holden M.T.G."/>
            <person name="Churcher C.M."/>
            <person name="Bentley S.D."/>
            <person name="Mungall K.L."/>
            <person name="Cerdeno-Tarraga A.-M."/>
            <person name="Temple L."/>
            <person name="James K.D."/>
            <person name="Harris B."/>
            <person name="Quail M.A."/>
            <person name="Achtman M."/>
            <person name="Atkin R."/>
            <person name="Baker S."/>
            <person name="Basham D."/>
            <person name="Bason N."/>
            <person name="Cherevach I."/>
            <person name="Chillingworth T."/>
            <person name="Collins M."/>
            <person name="Cronin A."/>
            <person name="Davis P."/>
            <person name="Doggett J."/>
            <person name="Feltwell T."/>
            <person name="Goble A."/>
            <person name="Hamlin N."/>
            <person name="Hauser H."/>
            <person name="Holroyd S."/>
            <person name="Jagels K."/>
            <person name="Leather S."/>
            <person name="Moule S."/>
            <person name="Norberczak H."/>
            <person name="O'Neil S."/>
            <person name="Ormond D."/>
            <person name="Price C."/>
            <person name="Rabbinowitsch E."/>
            <person name="Rutter S."/>
            <person name="Sanders M."/>
            <person name="Saunders D."/>
            <person name="Seeger K."/>
            <person name="Sharp S."/>
            <person name="Simmonds M."/>
            <person name="Skelton J."/>
            <person name="Squares R."/>
            <person name="Squares S."/>
            <person name="Stevens K."/>
            <person name="Unwin L."/>
            <person name="Whitehead S."/>
            <person name="Barrell B.G."/>
            <person name="Maskell D.J."/>
        </authorList>
    </citation>
    <scope>NUCLEOTIDE SEQUENCE [LARGE SCALE GENOMIC DNA]</scope>
    <source>
        <strain>ATCC BAA-588 / NCTC 13252 / RB50</strain>
    </source>
</reference>
<accession>Q7WDY2</accession>
<sequence>MRTAEITRNTNETRIRVAVNLDGTGKQTIDTGVPFLDHMLDQIARHGLIDLDIKADGDLHIDAHHTVEDVGITLGMAIAKAVGSKAGLRRYGHAYVPLDEALSRVVIDFSGRPGLEYHIDFTRARIGDFDVDLTREFFQGLVNHALMTLHIDNLRGFNAHHQCETVFKAFGRALRMALEVDPRMGDAVPSTKGVL</sequence>
<organism>
    <name type="scientific">Bordetella bronchiseptica (strain ATCC BAA-588 / NCTC 13252 / RB50)</name>
    <name type="common">Alcaligenes bronchisepticus</name>
    <dbReference type="NCBI Taxonomy" id="257310"/>
    <lineage>
        <taxon>Bacteria</taxon>
        <taxon>Pseudomonadati</taxon>
        <taxon>Pseudomonadota</taxon>
        <taxon>Betaproteobacteria</taxon>
        <taxon>Burkholderiales</taxon>
        <taxon>Alcaligenaceae</taxon>
        <taxon>Bordetella</taxon>
    </lineage>
</organism>